<dbReference type="EC" id="3.4.25.1" evidence="1"/>
<dbReference type="EMBL" id="M83674">
    <property type="protein sequence ID" value="AAA72102.1"/>
    <property type="molecule type" value="Genomic_DNA"/>
</dbReference>
<dbReference type="EMBL" id="AL445064">
    <property type="protein sequence ID" value="CAC11751.1"/>
    <property type="molecule type" value="Genomic_DNA"/>
</dbReference>
<dbReference type="PIR" id="A42068">
    <property type="entry name" value="A42068"/>
</dbReference>
<dbReference type="RefSeq" id="WP_010901036.1">
    <property type="nucleotide sequence ID" value="NC_002578.1"/>
</dbReference>
<dbReference type="PDB" id="1PMA">
    <property type="method" value="X-ray"/>
    <property type="resolution" value="3.40 A"/>
    <property type="chains" value="1/2/B/P/Q/R/S/T/U/V/W/X/Y/Z=1-211"/>
</dbReference>
<dbReference type="PDB" id="1YA7">
    <property type="method" value="X-ray"/>
    <property type="resolution" value="2.30 A"/>
    <property type="chains" value="H/I/J/K/L/M/N=1-211"/>
</dbReference>
<dbReference type="PDB" id="1YAR">
    <property type="method" value="X-ray"/>
    <property type="resolution" value="1.90 A"/>
    <property type="chains" value="H/I/J/K/L/M/N=1-211"/>
</dbReference>
<dbReference type="PDB" id="1YAU">
    <property type="method" value="X-ray"/>
    <property type="resolution" value="2.40 A"/>
    <property type="chains" value="H/I/J/K/L/M/N=1-211"/>
</dbReference>
<dbReference type="PDB" id="3C91">
    <property type="method" value="EM"/>
    <property type="resolution" value="6.80 A"/>
    <property type="chains" value="1/2/H/I/J/K/L/M/N/V/W/X/Y/Z=9-211"/>
</dbReference>
<dbReference type="PDB" id="3C92">
    <property type="method" value="EM"/>
    <property type="resolution" value="6.80 A"/>
    <property type="chains" value="1/2/H/I/J/K/L/M/N/V/W/X/Y/Z=9-211"/>
</dbReference>
<dbReference type="PDB" id="3IPM">
    <property type="method" value="X-ray"/>
    <property type="resolution" value="4.00 A"/>
    <property type="chains" value="H/I/J/K/L/M/N=1-211"/>
</dbReference>
<dbReference type="PDB" id="3J9I">
    <property type="method" value="EM"/>
    <property type="resolution" value="3.30 A"/>
    <property type="chains" value="1/2/H/I/J/K/L/M/N/V/W/X/Y/Z=9-211"/>
</dbReference>
<dbReference type="PDB" id="3JRM">
    <property type="method" value="X-ray"/>
    <property type="resolution" value="2.90 A"/>
    <property type="chains" value="H/I/J/K/L/M/N=9-211"/>
</dbReference>
<dbReference type="PDB" id="3JSE">
    <property type="method" value="X-ray"/>
    <property type="resolution" value="2.90 A"/>
    <property type="chains" value="H/I/J/K/L/M/N=9-211"/>
</dbReference>
<dbReference type="PDB" id="3JTL">
    <property type="method" value="X-ray"/>
    <property type="resolution" value="3.20 A"/>
    <property type="chains" value="H/I/J/K/L/M/N=9-211"/>
</dbReference>
<dbReference type="PDB" id="5VY3">
    <property type="method" value="EM"/>
    <property type="resolution" value="3.10 A"/>
    <property type="chains" value="1/B/D/F/H/J/L/N/P/R/T/V/X/Z=9-211"/>
</dbReference>
<dbReference type="PDB" id="5VY4">
    <property type="method" value="EM"/>
    <property type="resolution" value="3.30 A"/>
    <property type="chains" value="1/B/D/F/H/J/L/N/P/R/T/V/X/Z=9-211"/>
</dbReference>
<dbReference type="PDB" id="6BDF">
    <property type="method" value="EM"/>
    <property type="resolution" value="2.80 A"/>
    <property type="chains" value="1/B/D/F/H/J/L/N/P/R/T/V/X/Z=1-211"/>
</dbReference>
<dbReference type="PDB" id="6UTF">
    <property type="method" value="EM"/>
    <property type="resolution" value="3.40 A"/>
    <property type="chains" value="1/2/H/I/J/K/L/M/N/V/W/X/Y/Z=1-211"/>
</dbReference>
<dbReference type="PDB" id="6UTG">
    <property type="method" value="EM"/>
    <property type="resolution" value="3.40 A"/>
    <property type="chains" value="1/2/H/I/J/K/L/M/N/V/W/X/Y/Z=9-211"/>
</dbReference>
<dbReference type="PDB" id="6UTH">
    <property type="method" value="EM"/>
    <property type="resolution" value="3.40 A"/>
    <property type="chains" value="1/2/H/I/J/K/L/M/N/V/W/X/Y/Z=9-211"/>
</dbReference>
<dbReference type="PDB" id="6UTI">
    <property type="method" value="EM"/>
    <property type="resolution" value="3.40 A"/>
    <property type="chains" value="H/I/J/K/L/M/N/V/W/X/Y/Z/a/b=9-211"/>
</dbReference>
<dbReference type="PDB" id="6UTJ">
    <property type="method" value="EM"/>
    <property type="resolution" value="2.90 A"/>
    <property type="chains" value="1/2/H/I/J/K/L/M/N/V/W/X/Y/Z=9-211"/>
</dbReference>
<dbReference type="PDB" id="8F66">
    <property type="method" value="EM"/>
    <property type="resolution" value="2.28 A"/>
    <property type="chains" value="H/I/J/K/L/M/N/V/W/X/Y/Z/a/b=1-211"/>
</dbReference>
<dbReference type="PDB" id="8F6A">
    <property type="method" value="EM"/>
    <property type="resolution" value="2.06 A"/>
    <property type="chains" value="H/I/J/K/L/M/N/V/W/X/Y/Z/a/b=1-211"/>
</dbReference>
<dbReference type="PDB" id="8F7K">
    <property type="method" value="EM"/>
    <property type="resolution" value="1.94 A"/>
    <property type="chains" value="H/I/J/K/L/M/N/V/W/X/Y/Z/a/b=9-211"/>
</dbReference>
<dbReference type="PDB" id="9BUZ">
    <property type="method" value="EM"/>
    <property type="resolution" value="2.38 A"/>
    <property type="chains" value="H/I/J/K/L/M/N/V/W/X/Y/Z/a/b=1-211"/>
</dbReference>
<dbReference type="PDBsum" id="1PMA"/>
<dbReference type="PDBsum" id="1YA7"/>
<dbReference type="PDBsum" id="1YAR"/>
<dbReference type="PDBsum" id="1YAU"/>
<dbReference type="PDBsum" id="3C91"/>
<dbReference type="PDBsum" id="3C92"/>
<dbReference type="PDBsum" id="3IPM"/>
<dbReference type="PDBsum" id="3J9I"/>
<dbReference type="PDBsum" id="3JRM"/>
<dbReference type="PDBsum" id="3JSE"/>
<dbReference type="PDBsum" id="3JTL"/>
<dbReference type="PDBsum" id="5VY3"/>
<dbReference type="PDBsum" id="5VY4"/>
<dbReference type="PDBsum" id="6BDF"/>
<dbReference type="PDBsum" id="6UTF"/>
<dbReference type="PDBsum" id="6UTG"/>
<dbReference type="PDBsum" id="6UTH"/>
<dbReference type="PDBsum" id="6UTI"/>
<dbReference type="PDBsum" id="6UTJ"/>
<dbReference type="PDBsum" id="8F66"/>
<dbReference type="PDBsum" id="8F6A"/>
<dbReference type="PDBsum" id="8F7K"/>
<dbReference type="PDBsum" id="9BUZ"/>
<dbReference type="BMRB" id="P28061"/>
<dbReference type="EMDB" id="EMD-20877"/>
<dbReference type="EMDB" id="EMD-20878"/>
<dbReference type="EMDB" id="EMD-20879"/>
<dbReference type="EMDB" id="EMD-20880"/>
<dbReference type="EMDB" id="EMD-20881"/>
<dbReference type="EMDB" id="EMD-28876"/>
<dbReference type="EMDB" id="EMD-28878"/>
<dbReference type="EMDB" id="EMD-28906"/>
<dbReference type="EMDB" id="EMD-44926"/>
<dbReference type="EMDB" id="EMD-5924"/>
<dbReference type="EMDB" id="EMD-8741"/>
<dbReference type="EMDB" id="EMD-8742"/>
<dbReference type="SMR" id="P28061"/>
<dbReference type="FunCoup" id="P28061">
    <property type="interactions" value="179"/>
</dbReference>
<dbReference type="STRING" id="273075.gene:9571831"/>
<dbReference type="MEROPS" id="T01.002"/>
<dbReference type="PaxDb" id="273075-Ta0612"/>
<dbReference type="EnsemblBacteria" id="CAC11751">
    <property type="protein sequence ID" value="CAC11751"/>
    <property type="gene ID" value="CAC11751"/>
</dbReference>
<dbReference type="KEGG" id="tac:Ta0612"/>
<dbReference type="eggNOG" id="arCOG00970">
    <property type="taxonomic scope" value="Archaea"/>
</dbReference>
<dbReference type="HOGENOM" id="CLU_035750_7_2_2"/>
<dbReference type="InParanoid" id="P28061"/>
<dbReference type="OrthoDB" id="6330at2157"/>
<dbReference type="BRENDA" id="3.4.25.1">
    <property type="organism ID" value="6324"/>
</dbReference>
<dbReference type="EvolutionaryTrace" id="P28061"/>
<dbReference type="Proteomes" id="UP000001024">
    <property type="component" value="Chromosome"/>
</dbReference>
<dbReference type="GO" id="GO:0005737">
    <property type="term" value="C:cytoplasm"/>
    <property type="evidence" value="ECO:0007669"/>
    <property type="project" value="UniProtKB-SubCell"/>
</dbReference>
<dbReference type="GO" id="GO:0019774">
    <property type="term" value="C:proteasome core complex, beta-subunit complex"/>
    <property type="evidence" value="ECO:0000314"/>
    <property type="project" value="UniProtKB"/>
</dbReference>
<dbReference type="GO" id="GO:0004175">
    <property type="term" value="F:endopeptidase activity"/>
    <property type="evidence" value="ECO:0000314"/>
    <property type="project" value="UniProtKB"/>
</dbReference>
<dbReference type="GO" id="GO:0004298">
    <property type="term" value="F:threonine-type endopeptidase activity"/>
    <property type="evidence" value="ECO:0000314"/>
    <property type="project" value="UniProtKB"/>
</dbReference>
<dbReference type="GO" id="GO:0010498">
    <property type="term" value="P:proteasomal protein catabolic process"/>
    <property type="evidence" value="ECO:0000314"/>
    <property type="project" value="UniProtKB"/>
</dbReference>
<dbReference type="CDD" id="cd03764">
    <property type="entry name" value="proteasome_beta_archeal"/>
    <property type="match status" value="1"/>
</dbReference>
<dbReference type="FunFam" id="3.60.20.10:FF:000049">
    <property type="entry name" value="Proteasome subunit beta"/>
    <property type="match status" value="1"/>
</dbReference>
<dbReference type="Gene3D" id="3.60.20.10">
    <property type="entry name" value="Glutamine Phosphoribosylpyrophosphate, subunit 1, domain 1"/>
    <property type="match status" value="1"/>
</dbReference>
<dbReference type="HAMAP" id="MF_02113_A">
    <property type="entry name" value="Proteasome_B_A"/>
    <property type="match status" value="1"/>
</dbReference>
<dbReference type="InterPro" id="IPR029055">
    <property type="entry name" value="Ntn_hydrolases_N"/>
</dbReference>
<dbReference type="InterPro" id="IPR019983">
    <property type="entry name" value="Pept_T1A_Psome_bsu_arc"/>
</dbReference>
<dbReference type="InterPro" id="IPR000243">
    <property type="entry name" value="Pept_T1A_subB"/>
</dbReference>
<dbReference type="InterPro" id="IPR016050">
    <property type="entry name" value="Proteasome_bsu_CS"/>
</dbReference>
<dbReference type="InterPro" id="IPR001353">
    <property type="entry name" value="Proteasome_sua/b"/>
</dbReference>
<dbReference type="InterPro" id="IPR023333">
    <property type="entry name" value="Proteasome_suB-type"/>
</dbReference>
<dbReference type="NCBIfam" id="TIGR03634">
    <property type="entry name" value="arc_protsome_B"/>
    <property type="match status" value="1"/>
</dbReference>
<dbReference type="PANTHER" id="PTHR32194:SF0">
    <property type="entry name" value="ATP-DEPENDENT PROTEASE SUBUNIT HSLV"/>
    <property type="match status" value="1"/>
</dbReference>
<dbReference type="PANTHER" id="PTHR32194">
    <property type="entry name" value="METALLOPROTEASE TLDD"/>
    <property type="match status" value="1"/>
</dbReference>
<dbReference type="Pfam" id="PF00227">
    <property type="entry name" value="Proteasome"/>
    <property type="match status" value="1"/>
</dbReference>
<dbReference type="PRINTS" id="PR00141">
    <property type="entry name" value="PROTEASOME"/>
</dbReference>
<dbReference type="SUPFAM" id="SSF56235">
    <property type="entry name" value="N-terminal nucleophile aminohydrolases (Ntn hydrolases)"/>
    <property type="match status" value="1"/>
</dbReference>
<dbReference type="PROSITE" id="PS00854">
    <property type="entry name" value="PROTEASOME_BETA_1"/>
    <property type="match status" value="1"/>
</dbReference>
<dbReference type="PROSITE" id="PS51476">
    <property type="entry name" value="PROTEASOME_BETA_2"/>
    <property type="match status" value="1"/>
</dbReference>
<protein>
    <recommendedName>
        <fullName evidence="1">Proteasome subunit beta</fullName>
        <ecNumber evidence="1">3.4.25.1</ecNumber>
    </recommendedName>
    <alternativeName>
        <fullName evidence="1">20S proteasome beta subunit</fullName>
    </alternativeName>
    <alternativeName>
        <fullName evidence="1">Proteasome core protein PsmB</fullName>
    </alternativeName>
</protein>
<gene>
    <name evidence="1" type="primary">psmB</name>
    <name type="ordered locus">Ta0612</name>
</gene>
<proteinExistence type="evidence at protein level"/>
<sequence length="211" mass="23147">MNQTLETGTTTVGITLKDAVIMATERRVTMENFIMHKNGKKLFQIDTYTGMTIAGLVGDAQVLVRYMKAELELYRLQRRVNMPIEAVATLLSNMLNQVKYMPYMVQLLVGGIDTAPHVFSIDAAGGSVEDIYASTGSGSPFVYGVLESQYSEKMTVDEGVDLVIRAISAAKQRDSASGGMIDVAVITRKDGYVQLPTDQIESRIRKLGLIL</sequence>
<reference key="1">
    <citation type="journal article" date="1992" name="Biochemistry">
        <title>Primary structure of the Thermoplasma proteasome and its implications for the structure, function, and evolution of the multicatalytic proteinase.</title>
        <authorList>
            <person name="Zwickl P."/>
            <person name="Grziwa A."/>
            <person name="Puehler G."/>
            <person name="Dahlmann B."/>
            <person name="Lottspeich F."/>
            <person name="Baumeister W."/>
        </authorList>
    </citation>
    <scope>NUCLEOTIDE SEQUENCE [GENOMIC DNA]</scope>
    <scope>PARTIAL PROTEIN SEQUENCE</scope>
</reference>
<reference key="2">
    <citation type="journal article" date="2000" name="Nature">
        <title>The genome sequence of the thermoacidophilic scavenger Thermoplasma acidophilum.</title>
        <authorList>
            <person name="Ruepp A."/>
            <person name="Graml W."/>
            <person name="Santos-Martinez M.-L."/>
            <person name="Koretke K.K."/>
            <person name="Volker C."/>
            <person name="Mewes H.-W."/>
            <person name="Frishman D."/>
            <person name="Stocker S."/>
            <person name="Lupas A.N."/>
            <person name="Baumeister W."/>
        </authorList>
    </citation>
    <scope>NUCLEOTIDE SEQUENCE [LARGE SCALE GENOMIC DNA]</scope>
    <source>
        <strain>ATCC 25905 / DSM 1728 / JCM 9062 / NBRC 15155 / AMRC-C165</strain>
    </source>
</reference>
<reference key="3">
    <citation type="journal article" date="1997" name="J. Biol. Chem.">
        <title>Processive degradation of proteins and other catalytic properties of the proteasome from Thermoplasma acidophilum.</title>
        <authorList>
            <person name="Akopian T.N."/>
            <person name="Kisselev A.F."/>
            <person name="Goldberg A.L."/>
        </authorList>
    </citation>
    <scope>PROTEIN SEQUENCE OF N-TERMINUS</scope>
    <scope>FUNCTION</scope>
    <scope>CATALYTIC ACTIVITY</scope>
    <scope>KINETIC PARAMETERS</scope>
</reference>
<reference key="4">
    <citation type="journal article" date="1992" name="EMBO J.">
        <title>Subunit stoichiometry and three-dimensional arrangement in proteasomes from Thermoplasma acidophilum.</title>
        <authorList>
            <person name="Puehler G."/>
            <person name="Weinkauf S."/>
            <person name="Bachmann L."/>
            <person name="Mueller S."/>
            <person name="Engel E."/>
            <person name="Hegerl R."/>
            <person name="Baumeister W."/>
        </authorList>
    </citation>
    <scope>SUBUNIT</scope>
</reference>
<reference key="5">
    <citation type="journal article" date="1995" name="Science">
        <title>Proteasome from Thermoplasma acidophilum: a threonine protease.</title>
        <authorList>
            <person name="Seemuller E."/>
            <person name="Lupas A."/>
            <person name="Stock D."/>
            <person name="Lowe J."/>
            <person name="Huber R."/>
            <person name="Baumeister W."/>
        </authorList>
    </citation>
    <scope>ACTIVE SITE</scope>
    <scope>CATALYTIC MECHANISM</scope>
    <scope>MUTAGENESIS OF THR-9</scope>
</reference>
<reference key="6">
    <citation type="journal article" date="1996" name="Nature">
        <title>Autocatalytic processing of the 20S proteasome.</title>
        <authorList>
            <person name="Seemuller E."/>
            <person name="Lupas A."/>
            <person name="Baumeister W."/>
        </authorList>
    </citation>
    <scope>AUTOCATALYTIC PROCESSING</scope>
</reference>
<reference key="7">
    <citation type="journal article" date="1998" name="J. Biol. Chem.">
        <title>Range of sizes of peptide products generated during degradation of different proteins by archaeal proteasomes.</title>
        <authorList>
            <person name="Kisselev A.F."/>
            <person name="Akopian T.N."/>
            <person name="Goldberg A.L."/>
        </authorList>
    </citation>
    <scope>CHARACTERIZATION</scope>
</reference>
<reference key="8">
    <citation type="journal article" date="2005" name="Mol. Cell">
        <title>ATP binding to PAN or the 26S ATPases causes association with the 20S proteasome, gate opening, and translocation of unfolded proteins.</title>
        <authorList>
            <person name="Smith D.M."/>
            <person name="Kafri G."/>
            <person name="Cheng Y."/>
            <person name="Ng D."/>
            <person name="Walz T."/>
            <person name="Goldberg A.L."/>
        </authorList>
    </citation>
    <scope>INTERACTION WITH PAN</scope>
    <scope>SUBUNIT</scope>
    <scope>GATED STRUCTURE</scope>
</reference>
<reference key="9">
    <citation type="journal article" date="2007" name="Mol. Cell">
        <title>Docking of the proteasomal ATPases' carboxyl termini in the 20S proteasome's alpha ring opens the gate for substrate entry.</title>
        <authorList>
            <person name="Smith D.M."/>
            <person name="Chang S.C."/>
            <person name="Park S."/>
            <person name="Finley D."/>
            <person name="Cheng Y."/>
            <person name="Goldberg A.L."/>
        </authorList>
    </citation>
    <scope>GATE OPENING MECHANISM</scope>
    <scope>ACTIVITY REGULATION</scope>
</reference>
<reference key="10">
    <citation type="journal article" date="1995" name="Science">
        <title>Crystal structure of the 20S proteasome from the archaeon T. acidophilum at 3.4-A resolution.</title>
        <authorList>
            <person name="Lowe J."/>
            <person name="Stock D."/>
            <person name="Jap B."/>
            <person name="Zwickl P."/>
            <person name="Baumeister W."/>
            <person name="Huber R."/>
        </authorList>
    </citation>
    <scope>X-RAY CRYSTALLOGRAPHY (3.4 ANGSTROMS) IN COMPLEX WITH ALPHA SUBUNIT</scope>
    <scope>SUBUNIT</scope>
</reference>
<reference key="11">
    <citation type="journal article" date="2005" name="Mol. Cell">
        <title>The 1.9 A structure of a proteasome-11S activator complex and implications for proteasome-PAN/PA700 interactions.</title>
        <authorList>
            <person name="Forster A."/>
            <person name="Masters E.I."/>
            <person name="Whitby F.G."/>
            <person name="Robinson H."/>
            <person name="Hill C.P."/>
        </authorList>
    </citation>
    <scope>X-RAY CRYSTALLOGRAPHY (1.9 ANGSTROMS) IN COMPLEX WITH ALPHA SUBUNIT AND T.BRUCEI PA26</scope>
</reference>
<reference key="12">
    <citation type="journal article" date="2008" name="Mol. Cell">
        <title>Mechanism of gate opening in the 20S proteasome by the proteasomal ATPases.</title>
        <authorList>
            <person name="Rabl J."/>
            <person name="Smith D.M."/>
            <person name="Yu Y."/>
            <person name="Chang S.C."/>
            <person name="Goldberg A.L."/>
            <person name="Cheng Y."/>
        </authorList>
    </citation>
    <scope>STRUCTURE BY ELECTRON MICROSCOPY (6.8 ANGSTROMS) OF THE OPEN-GATE AND CLOSED-GATE CONFORMATIONS</scope>
    <scope>GATE OPENING MECHANISM</scope>
</reference>
<reference key="13">
    <citation type="journal article" date="2010" name="EMBO J.">
        <title>Interactions of PAN's C-termini with archaeal 20S proteasome and implications for the eukaryotic proteasome-ATPase interactions.</title>
        <authorList>
            <person name="Yu Y."/>
            <person name="Smith D.M."/>
            <person name="Kim H.M."/>
            <person name="Rodriguez V."/>
            <person name="Goldberg A.L."/>
            <person name="Cheng Y."/>
        </authorList>
    </citation>
    <scope>X-RAY CRYSTALLOGRAPHY (4.0 ANGSTROMS) IN COMPLEX WITH THE ALPHA SUBUNIT AND THE C-TERMINUS OF PAN FROM M.JANNASCHII</scope>
</reference>
<reference key="14">
    <citation type="journal article" date="2010" name="J. Biol. Chem.">
        <title>Structural models for interactions between the 20S proteasome and its PAN/19S activators.</title>
        <authorList>
            <person name="Stadtmueller B.M."/>
            <person name="Ferrell K."/>
            <person name="Whitby F.G."/>
            <person name="Heroux A."/>
            <person name="Robinson H."/>
            <person name="Myszka D.G."/>
            <person name="Hill C.P."/>
        </authorList>
    </citation>
    <scope>X-RAY CRYSTALLOGRAPHY (2.9 ANGSTROMS) IN COMPLEX WITH ALPHA SUBUNIT AND CHIMERIC PA26 CONSTRUCTS</scope>
</reference>
<reference key="15">
    <citation type="journal article" date="2010" name="Science">
        <title>Dynamic regulation of archaeal proteasome gate opening as studied by TROSY NMR.</title>
        <authorList>
            <person name="Religa T.L."/>
            <person name="Sprangers R."/>
            <person name="Kay L.E."/>
        </authorList>
    </citation>
    <scope>ACTIVITY REGULATION</scope>
</reference>
<keyword id="KW-0002">3D-structure</keyword>
<keyword id="KW-0068">Autocatalytic cleavage</keyword>
<keyword id="KW-0963">Cytoplasm</keyword>
<keyword id="KW-0903">Direct protein sequencing</keyword>
<keyword id="KW-0378">Hydrolase</keyword>
<keyword id="KW-0645">Protease</keyword>
<keyword id="KW-0647">Proteasome</keyword>
<keyword id="KW-1185">Reference proteome</keyword>
<keyword id="KW-0888">Threonine protease</keyword>
<keyword id="KW-0865">Zymogen</keyword>
<name>PSB_THEAC</name>
<accession>P28061</accession>
<evidence type="ECO:0000255" key="1">
    <source>
        <dbReference type="HAMAP-Rule" id="MF_02113"/>
    </source>
</evidence>
<evidence type="ECO:0000269" key="2">
    <source>
    </source>
</evidence>
<evidence type="ECO:0000269" key="3">
    <source>
    </source>
</evidence>
<evidence type="ECO:0000269" key="4">
    <source>
    </source>
</evidence>
<evidence type="ECO:0000269" key="5">
    <source>
    </source>
</evidence>
<evidence type="ECO:0000269" key="6">
    <source>
    </source>
</evidence>
<evidence type="ECO:0000269" key="7">
    <source>
    </source>
</evidence>
<evidence type="ECO:0000269" key="8">
    <source>
    </source>
</evidence>
<evidence type="ECO:0000269" key="9">
    <source>
    </source>
</evidence>
<evidence type="ECO:0000269" key="10">
    <source>
    </source>
</evidence>
<evidence type="ECO:0000269" key="11">
    <source>
    </source>
</evidence>
<evidence type="ECO:0007829" key="12">
    <source>
        <dbReference type="PDB" id="1YAR"/>
    </source>
</evidence>
<evidence type="ECO:0007829" key="13">
    <source>
        <dbReference type="PDB" id="3J9I"/>
    </source>
</evidence>
<evidence type="ECO:0007829" key="14">
    <source>
        <dbReference type="PDB" id="6UTI"/>
    </source>
</evidence>
<organism>
    <name type="scientific">Thermoplasma acidophilum (strain ATCC 25905 / DSM 1728 / JCM 9062 / NBRC 15155 / AMRC-C165)</name>
    <dbReference type="NCBI Taxonomy" id="273075"/>
    <lineage>
        <taxon>Archaea</taxon>
        <taxon>Methanobacteriati</taxon>
        <taxon>Thermoplasmatota</taxon>
        <taxon>Thermoplasmata</taxon>
        <taxon>Thermoplasmatales</taxon>
        <taxon>Thermoplasmataceae</taxon>
        <taxon>Thermoplasma</taxon>
    </lineage>
</organism>
<comment type="function">
    <text evidence="1 11">Component of the proteasome core, a large protease complex with broad specificity involved in protein degradation. The T.acidophilum proteasome is able to cleave oligopeptides after Tyr, Leu, Phe, and to a lesser extent after Glu and Arg. Thus, displays chymotrypsin-like activity and low level of caspase-like and trypsin-like activities.</text>
</comment>
<comment type="catalytic activity">
    <reaction evidence="1 11">
        <text>Cleavage of peptide bonds with very broad specificity.</text>
        <dbReference type="EC" id="3.4.25.1"/>
    </reaction>
</comment>
<comment type="activity regulation">
    <text evidence="1 5 8">The formation of the proteasomal ATPase PAN-20S proteasome complex, via the docking of the C-termini of PAN into the intersubunit pockets in the alpha-rings, triggers opening of the gate for substrate entry. Interconversion between the open-gate and close-gate conformations leads to a dynamic regulation of the 20S proteasome proteolysis activity.</text>
</comment>
<comment type="biophysicochemical properties">
    <kinetics>
        <KM evidence="11">39 uM for Suc-LLVY-Amc (at 55 degrees Celsius)</KM>
        <Vmax evidence="11">28.0 nmol/min/mg enzyme with Suc-LLVY-Amc as substrate (at 55 degrees Celsius)</Vmax>
    </kinetics>
</comment>
<comment type="subunit">
    <text evidence="1 2 3 4 6 7 9">The 20S proteasome core is composed of 14 alpha and 14 beta subunits that assemble into four stacked heptameric rings, resulting in a barrel-shaped structure. The two inner rings, each composed of seven catalytic beta subunits, are sandwiched by two outer rings, each composed of seven alpha subunits. The catalytic chamber with the active sites is on the inside of the barrel. Has a gated structure, the ends of the cylinder being occluded by the N-termini of the alpha-subunits. Is capped at one or both ends by the proteasome regulatory ATPase, PAN.</text>
</comment>
<comment type="subcellular location">
    <subcellularLocation>
        <location evidence="1">Cytoplasm</location>
    </subcellularLocation>
</comment>
<comment type="miscellaneous">
    <text>The configuration of the closed gate contains an opening large enough to allow rapid entry of tetrapeptides but able to impede the entry of proteins and longer peptides.</text>
</comment>
<comment type="similarity">
    <text evidence="1">Belongs to the peptidase T1B family.</text>
</comment>
<feature type="propeptide" id="PRO_0000026675" description="Removed in mature form; by autocatalysis" evidence="1 11">
    <location>
        <begin position="1"/>
        <end position="8"/>
    </location>
</feature>
<feature type="chain" id="PRO_0000026676" description="Proteasome subunit beta">
    <location>
        <begin position="9"/>
        <end position="211"/>
    </location>
</feature>
<feature type="active site" description="Nucleophile" evidence="1 10">
    <location>
        <position position="9"/>
    </location>
</feature>
<feature type="mutagenesis site" description="No effect on catalytic activity." evidence="10">
    <original>T</original>
    <variation>S</variation>
    <location>
        <position position="9"/>
    </location>
</feature>
<feature type="strand" evidence="12">
    <location>
        <begin position="11"/>
        <end position="16"/>
    </location>
</feature>
<feature type="strand" evidence="12">
    <location>
        <begin position="19"/>
        <end position="24"/>
    </location>
</feature>
<feature type="strand" evidence="12">
    <location>
        <begin position="28"/>
        <end position="30"/>
    </location>
</feature>
<feature type="strand" evidence="12">
    <location>
        <begin position="33"/>
        <end position="37"/>
    </location>
</feature>
<feature type="strand" evidence="12">
    <location>
        <begin position="42"/>
        <end position="46"/>
    </location>
</feature>
<feature type="strand" evidence="12">
    <location>
        <begin position="49"/>
        <end position="55"/>
    </location>
</feature>
<feature type="helix" evidence="12">
    <location>
        <begin position="57"/>
        <end position="78"/>
    </location>
</feature>
<feature type="helix" evidence="12">
    <location>
        <begin position="84"/>
        <end position="97"/>
    </location>
</feature>
<feature type="turn" evidence="12">
    <location>
        <begin position="98"/>
        <end position="100"/>
    </location>
</feature>
<feature type="strand" evidence="12">
    <location>
        <begin position="105"/>
        <end position="121"/>
    </location>
</feature>
<feature type="strand" evidence="14">
    <location>
        <begin position="123"/>
        <end position="125"/>
    </location>
</feature>
<feature type="strand" evidence="12">
    <location>
        <begin position="127"/>
        <end position="136"/>
    </location>
</feature>
<feature type="helix" evidence="12">
    <location>
        <begin position="139"/>
        <end position="149"/>
    </location>
</feature>
<feature type="helix" evidence="12">
    <location>
        <begin position="156"/>
        <end position="173"/>
    </location>
</feature>
<feature type="strand" evidence="13">
    <location>
        <begin position="174"/>
        <end position="176"/>
    </location>
</feature>
<feature type="strand" evidence="12">
    <location>
        <begin position="182"/>
        <end position="187"/>
    </location>
</feature>
<feature type="turn" evidence="12">
    <location>
        <begin position="188"/>
        <end position="190"/>
    </location>
</feature>
<feature type="strand" evidence="12">
    <location>
        <begin position="191"/>
        <end position="194"/>
    </location>
</feature>
<feature type="helix" evidence="12">
    <location>
        <begin position="197"/>
        <end position="207"/>
    </location>
</feature>